<organism>
    <name type="scientific">Epstein-Barr virus (strain B95-8)</name>
    <name type="common">HHV-4</name>
    <name type="synonym">Human herpesvirus 4</name>
    <dbReference type="NCBI Taxonomy" id="10377"/>
    <lineage>
        <taxon>Viruses</taxon>
        <taxon>Duplodnaviria</taxon>
        <taxon>Heunggongvirae</taxon>
        <taxon>Peploviricota</taxon>
        <taxon>Herviviricetes</taxon>
        <taxon>Herpesvirales</taxon>
        <taxon>Orthoherpesviridae</taxon>
        <taxon>Gammaherpesvirinae</taxon>
        <taxon>Lymphocryptovirus</taxon>
        <taxon>Lymphocryptovirus humangamma4</taxon>
        <taxon>Epstein-Barr virus (strain GD1)</taxon>
    </lineage>
</organism>
<reference key="1">
    <citation type="journal article" date="1984" name="Nature">
        <title>DNA sequence and expression of the B95-8 Epstein-Barr virus genome.</title>
        <authorList>
            <person name="Baer R."/>
            <person name="Bankier A.T."/>
            <person name="Biggin M.D."/>
            <person name="Deininger P.L."/>
            <person name="Farrell P.J."/>
            <person name="Gibson T.J."/>
            <person name="Hatfull G."/>
            <person name="Hudson G.S."/>
            <person name="Satchwell S.C."/>
            <person name="Seguin C."/>
            <person name="Tuffnell P.S."/>
            <person name="Barrell B.G."/>
        </authorList>
    </citation>
    <scope>NUCLEOTIDE SEQUENCE [LARGE SCALE GENOMIC DNA]</scope>
</reference>
<reference key="2">
    <citation type="journal article" date="1985" name="Virology">
        <title>The short unique region of the B95-8 Epstein-Barr virus genome.</title>
        <authorList>
            <person name="Hudson G.S."/>
            <person name="Bankier A.T."/>
            <person name="Satchwell S.C."/>
            <person name="Barrell B.G."/>
        </authorList>
    </citation>
    <scope>NUCLEOTIDE SEQUENCE [GENOMIC DNA]</scope>
</reference>
<reference key="3">
    <citation type="journal article" date="2003" name="Virology">
        <title>Updated Epstein-Barr virus (EBV) DNA sequence and analysis of a promoter for the BART (CST, BARF0) RNAs of EBV.</title>
        <authorList>
            <person name="de Jesus O."/>
            <person name="Smith P.R."/>
            <person name="Spender L.C."/>
            <person name="Elgueta Karstegl C."/>
            <person name="Niller H.H."/>
            <person name="Huang D."/>
            <person name="Farrell P.J."/>
        </authorList>
    </citation>
    <scope>GENOME REANNOTATION</scope>
</reference>
<reference key="4">
    <citation type="journal article" date="1990" name="Science">
        <title>Homology of cytokine synthesis inhibitory factor (IL-10) to the Epstein-Barr virus gene BCRFI.</title>
        <authorList>
            <person name="Moore K.W."/>
            <person name="Vieira P."/>
            <person name="Fiorentino D.F."/>
            <person name="Trounstine M.L."/>
            <person name="Khan T.A."/>
            <person name="Mosmann T.R."/>
        </authorList>
    </citation>
    <scope>FUNCTION</scope>
</reference>
<reference key="5">
    <citation type="journal article" date="1997" name="Blood">
        <title>Downregulation of TAP1 in B lymphocytes by cellular and Epstein-Barr virus-encoded interleukin-10.</title>
        <authorList>
            <person name="Zeidler R."/>
            <person name="Eissner G."/>
            <person name="Meissner P."/>
            <person name="Uebel S."/>
            <person name="Tampe R."/>
            <person name="Lazis S."/>
            <person name="Hammerschmidt W."/>
        </authorList>
    </citation>
    <scope>FUNCTION</scope>
</reference>
<reference key="6">
    <citation type="journal article" date="1997" name="J. Mol. Biol.">
        <title>Crystal structure of Epstein-Barr virus protein BCRF1, a homolog of cellular interleukin-10.</title>
        <authorList>
            <person name="Zdanov A."/>
            <person name="Schalk-Hihi C."/>
            <person name="Menon S."/>
            <person name="Moore K.W."/>
            <person name="Wlodawer A."/>
        </authorList>
    </citation>
    <scope>X-RAY CRYSTALLOGRAPHY (1.9 ANGSTROMS)</scope>
</reference>
<reference key="7">
    <citation type="journal article" date="2005" name="Structure">
        <title>Same structure, different function crystal structure of the Epstein-Barr virus IL-10 bound to the soluble IL-10R1 chain.</title>
        <authorList>
            <person name="Yoon S.I."/>
            <person name="Jones B.C."/>
            <person name="Logsdon N.J."/>
            <person name="Walter M.R."/>
        </authorList>
    </citation>
    <scope>X-RAY CRYSTALLOGRAPHY (2.7 ANGSTROMS) OF 26-170 IN COMPLEX WITH HUMAN IL10R1</scope>
</reference>
<gene>
    <name type="ORF">BCRF1</name>
</gene>
<name>IL10H_EBVB9</name>
<organismHost>
    <name type="scientific">Homo sapiens</name>
    <name type="common">Human</name>
    <dbReference type="NCBI Taxonomy" id="9606"/>
</organismHost>
<evidence type="ECO:0000255" key="1"/>
<evidence type="ECO:0000269" key="2">
    <source>
    </source>
</evidence>
<evidence type="ECO:0000269" key="3">
    <source>
    </source>
</evidence>
<evidence type="ECO:0000269" key="4">
    <source>
    </source>
</evidence>
<evidence type="ECO:0000305" key="5"/>
<evidence type="ECO:0007829" key="6">
    <source>
        <dbReference type="PDB" id="1VLK"/>
    </source>
</evidence>
<evidence type="ECO:0007829" key="7">
    <source>
        <dbReference type="PDB" id="1Y6N"/>
    </source>
</evidence>
<proteinExistence type="evidence at protein level"/>
<feature type="signal peptide" evidence="1">
    <location>
        <begin position="1"/>
        <end position="23"/>
    </location>
</feature>
<feature type="chain" id="PRO_0000015375" description="Viral interleukin-10 homolog">
    <location>
        <begin position="24"/>
        <end position="170"/>
    </location>
</feature>
<feature type="coiled-coil region" evidence="1">
    <location>
        <begin position="97"/>
        <end position="145"/>
    </location>
</feature>
<feature type="glycosylation site" description="N-linked (GlcNAc...) asparagine; by host" evidence="1">
    <location>
        <position position="127"/>
    </location>
</feature>
<feature type="disulfide bond">
    <location>
        <begin position="27"/>
        <end position="119"/>
    </location>
</feature>
<feature type="disulfide bond">
    <location>
        <begin position="73"/>
        <end position="125"/>
    </location>
</feature>
<feature type="turn" evidence="6">
    <location>
        <begin position="30"/>
        <end position="33"/>
    </location>
</feature>
<feature type="helix" evidence="6">
    <location>
        <begin position="34"/>
        <end position="45"/>
    </location>
</feature>
<feature type="turn" evidence="6">
    <location>
        <begin position="46"/>
        <end position="48"/>
    </location>
</feature>
<feature type="turn" evidence="7">
    <location>
        <begin position="49"/>
        <end position="51"/>
    </location>
</feature>
<feature type="helix" evidence="6">
    <location>
        <begin position="61"/>
        <end position="68"/>
    </location>
</feature>
<feature type="helix" evidence="6">
    <location>
        <begin position="72"/>
        <end position="85"/>
    </location>
</feature>
<feature type="helix" evidence="6">
    <location>
        <begin position="87"/>
        <end position="94"/>
    </location>
</feature>
<feature type="turn" evidence="6">
    <location>
        <begin position="96"/>
        <end position="98"/>
    </location>
</feature>
<feature type="helix" evidence="6">
    <location>
        <begin position="99"/>
        <end position="118"/>
    </location>
</feature>
<feature type="turn" evidence="6">
    <location>
        <begin position="120"/>
        <end position="122"/>
    </location>
</feature>
<feature type="helix" evidence="6">
    <location>
        <begin position="124"/>
        <end position="126"/>
    </location>
</feature>
<feature type="helix" evidence="6">
    <location>
        <begin position="130"/>
        <end position="141"/>
    </location>
</feature>
<feature type="helix" evidence="6">
    <location>
        <begin position="143"/>
        <end position="152"/>
    </location>
</feature>
<feature type="helix" evidence="6">
    <location>
        <begin position="154"/>
        <end position="166"/>
    </location>
</feature>
<keyword id="KW-0002">3D-structure</keyword>
<keyword id="KW-0175">Coiled coil</keyword>
<keyword id="KW-0202">Cytokine</keyword>
<keyword id="KW-1015">Disulfide bond</keyword>
<keyword id="KW-1125">Evasion of host immunity by viral interleukin-like protein</keyword>
<keyword id="KW-0325">Glycoprotein</keyword>
<keyword id="KW-0945">Host-virus interaction</keyword>
<keyword id="KW-1185">Reference proteome</keyword>
<keyword id="KW-0964">Secreted</keyword>
<keyword id="KW-0732">Signal</keyword>
<keyword id="KW-0899">Viral immunoevasion</keyword>
<dbReference type="EMBL" id="V01555">
    <property type="protein sequence ID" value="CAA24863.1"/>
    <property type="molecule type" value="Genomic_DNA"/>
</dbReference>
<dbReference type="EMBL" id="M11924">
    <property type="protein sequence ID" value="AAA45900.1"/>
    <property type="molecule type" value="Genomic_DNA"/>
</dbReference>
<dbReference type="EMBL" id="AJ507799">
    <property type="protein sequence ID" value="CAD53385.1"/>
    <property type="molecule type" value="Genomic_DNA"/>
</dbReference>
<dbReference type="PIR" id="A03741">
    <property type="entry name" value="QQBE2"/>
</dbReference>
<dbReference type="RefSeq" id="YP_401634.1">
    <property type="nucleotide sequence ID" value="NC_007605.1"/>
</dbReference>
<dbReference type="PDB" id="1VLK">
    <property type="method" value="X-ray"/>
    <property type="resolution" value="1.90 A"/>
    <property type="chains" value="A=26-170"/>
</dbReference>
<dbReference type="PDB" id="1Y6M">
    <property type="method" value="X-ray"/>
    <property type="resolution" value="2.80 A"/>
    <property type="chains" value="L=26-170"/>
</dbReference>
<dbReference type="PDB" id="1Y6N">
    <property type="method" value="X-ray"/>
    <property type="resolution" value="2.70 A"/>
    <property type="chains" value="L=26-170"/>
</dbReference>
<dbReference type="PDBsum" id="1VLK"/>
<dbReference type="PDBsum" id="1Y6M"/>
<dbReference type="PDBsum" id="1Y6N"/>
<dbReference type="SMR" id="P03180"/>
<dbReference type="DIP" id="DIP-35519N"/>
<dbReference type="IntAct" id="P03180">
    <property type="interactions" value="1"/>
</dbReference>
<dbReference type="DNASU" id="3783689"/>
<dbReference type="GeneID" id="3783689"/>
<dbReference type="KEGG" id="vg:3783689"/>
<dbReference type="EvolutionaryTrace" id="P03180"/>
<dbReference type="Proteomes" id="UP000153037">
    <property type="component" value="Segment"/>
</dbReference>
<dbReference type="GO" id="GO:0005615">
    <property type="term" value="C:extracellular space"/>
    <property type="evidence" value="ECO:0007669"/>
    <property type="project" value="UniProtKB-KW"/>
</dbReference>
<dbReference type="GO" id="GO:0005125">
    <property type="term" value="F:cytokine activity"/>
    <property type="evidence" value="ECO:0007669"/>
    <property type="project" value="UniProtKB-KW"/>
</dbReference>
<dbReference type="GO" id="GO:0006955">
    <property type="term" value="P:immune response"/>
    <property type="evidence" value="ECO:0007669"/>
    <property type="project" value="InterPro"/>
</dbReference>
<dbReference type="GO" id="GO:0001817">
    <property type="term" value="P:regulation of cytokine production"/>
    <property type="evidence" value="ECO:0007669"/>
    <property type="project" value="UniProtKB-ARBA"/>
</dbReference>
<dbReference type="GO" id="GO:0141184">
    <property type="term" value="P:symbiont-mediated activation of host anti-inflammatory cytokine signaling"/>
    <property type="evidence" value="ECO:0000269"/>
    <property type="project" value="SigSci"/>
</dbReference>
<dbReference type="GO" id="GO:0140886">
    <property type="term" value="P:symbiont-mediated suppression of host interferon-mediated signaling pathway"/>
    <property type="evidence" value="ECO:0000269"/>
    <property type="project" value="SigSci"/>
</dbReference>
<dbReference type="GO" id="GO:0141173">
    <property type="term" value="P:symbiont-mediated suppression of host pro-inflammatory cytokine signaling"/>
    <property type="evidence" value="ECO:0000269"/>
    <property type="project" value="SigSci"/>
</dbReference>
<dbReference type="FunFam" id="1.20.1250.10:FF:000011">
    <property type="entry name" value="Interleukin-10"/>
    <property type="match status" value="1"/>
</dbReference>
<dbReference type="Gene3D" id="1.20.1250.10">
    <property type="match status" value="1"/>
</dbReference>
<dbReference type="InterPro" id="IPR009079">
    <property type="entry name" value="4_helix_cytokine-like_core"/>
</dbReference>
<dbReference type="InterPro" id="IPR000098">
    <property type="entry name" value="IL-10"/>
</dbReference>
<dbReference type="InterPro" id="IPR020443">
    <property type="entry name" value="IL-10/19/20/24/26"/>
</dbReference>
<dbReference type="InterPro" id="IPR020423">
    <property type="entry name" value="IL-10_CS"/>
</dbReference>
<dbReference type="PANTHER" id="PTHR48482:SF5">
    <property type="entry name" value="INTERLEUKIN-10"/>
    <property type="match status" value="1"/>
</dbReference>
<dbReference type="PANTHER" id="PTHR48482">
    <property type="entry name" value="INTERLEUKIN-19-RELATED"/>
    <property type="match status" value="1"/>
</dbReference>
<dbReference type="Pfam" id="PF00726">
    <property type="entry name" value="IL10"/>
    <property type="match status" value="1"/>
</dbReference>
<dbReference type="PRINTS" id="PR01294">
    <property type="entry name" value="INTRLEUKIN10"/>
</dbReference>
<dbReference type="SMART" id="SM00188">
    <property type="entry name" value="IL10"/>
    <property type="match status" value="1"/>
</dbReference>
<dbReference type="SUPFAM" id="SSF47266">
    <property type="entry name" value="4-helical cytokines"/>
    <property type="match status" value="1"/>
</dbReference>
<dbReference type="PROSITE" id="PS00520">
    <property type="entry name" value="INTERLEUKIN_10"/>
    <property type="match status" value="1"/>
</dbReference>
<comment type="function">
    <text evidence="3 4">Plays a role in masking infected cells for immune recognition by cytotoxic T-lymphocytes. Down-regulates the expression of the host TAP1 gene (transporter associated with antigen processing), thereby affecting the transport of peptides into the endoplasmic reticulum and subsequent peptide loading by MHC class I molecules. Inhibits IFN-gamma synthesis.</text>
</comment>
<comment type="subunit">
    <text evidence="2">Homodimer.</text>
</comment>
<comment type="interaction">
    <interactant intactId="EBI-1042167">
        <id>P03180</id>
    </interactant>
    <interactant intactId="EBI-1031656">
        <id>Q13651</id>
        <label>IL10RA</label>
    </interactant>
    <organismsDiffer>true</organismsDiffer>
    <experiments>4</experiments>
</comment>
<comment type="subcellular location">
    <subcellularLocation>
        <location evidence="5">Secreted</location>
    </subcellularLocation>
</comment>
<comment type="similarity">
    <text evidence="5">Belongs to the IL-10 family.</text>
</comment>
<comment type="caution">
    <text evidence="5">Be careful of the possible confusion between BCRF1 with BcRF1.</text>
</comment>
<sequence length="170" mass="19914">MERRLVVTLQCLVLLYLAPECGGTDQCDNFPQMLRDLRDAFSRVKTFFQTKDEVDNLLLKESLLEDFKGYLGCQALSEMIQFYLEEVMPQAENQDPEAKDHVNSLGENLKTLRLRLRRCHRFLPCENKSKAVEQIKNAFNKLQEKGIYKAMSEFDIFINYIEAYMTIKAR</sequence>
<accession>P03180</accession>
<accession>Q777H2</accession>
<protein>
    <recommendedName>
        <fullName>Viral interleukin-10 homolog</fullName>
        <shortName>vIL-10</shortName>
    </recommendedName>
    <alternativeName>
        <fullName>20 kDa protein</fullName>
    </alternativeName>
    <alternativeName>
        <fullName>Protein BCRF1</fullName>
    </alternativeName>
</protein>